<keyword id="KW-0067">ATP-binding</keyword>
<keyword id="KW-0217">Developmental protein</keyword>
<keyword id="KW-0221">Differentiation</keyword>
<keyword id="KW-0547">Nucleotide-binding</keyword>
<keyword id="KW-1185">Reference proteome</keyword>
<keyword id="KW-0744">Spermatogenesis</keyword>
<keyword id="KW-0346">Stress response</keyword>
<comment type="function">
    <text evidence="3">Molecular chaperone implicated in a wide variety of cellular processes, including protection of the proteome from stress, folding and transport of newly synthesized polypeptides, activation of proteolysis of misfolded proteins and the formation and dissociation of protein complexes. Plays a pivotal role in the protein quality control system, ensuring the correct folding of proteins, the re-folding of misfolded proteins and controlling the targeting of proteins for subsequent degradation. This is achieved through cycles of ATP binding, ATP hydrolysis and ADP release, mediated by co-chaperones. The affinity for polypeptides is regulated by its nucleotide bound state. In the ATP-bound form, it has a low affinity for substrate proteins. However, upon hydrolysis of the ATP to ADP, it undergoes a conformational change that increases its affinity for substrate proteins. It goes through repeated cycles of ATP hydrolysis and nucleotide exchange, which permits cycles of substrate binding and release. Positive regulator of PRKN translocation to damaged mitochondria.</text>
</comment>
<comment type="subunit">
    <text evidence="3">Interacts with PRKN.</text>
</comment>
<comment type="tissue specificity">
    <text>Expressed in spermatids.</text>
</comment>
<comment type="developmental stage">
    <text>Specifically expressed in postmeiotic phases of spermatogenesis.</text>
</comment>
<comment type="domain">
    <text evidence="3">The N-terminal nucleotide binding domain (NBD) (also known as the ATPase domain) is responsible for binding and hydrolyzing ATP. The C-terminal substrate-binding domain (SBD) (also known as peptide-binding domain) binds to the client/substrate proteins. The two domains are allosterically coupled so that, when ATP is bound to the NBD, the SBD binds relatively weakly to clients. When ADP is bound in the NBD, a conformational change enhances the affinity of the SBD for client proteins.</text>
</comment>
<comment type="similarity">
    <text evidence="4">Belongs to the heat shock protein 70 family.</text>
</comment>
<protein>
    <recommendedName>
        <fullName>Heat shock 70 kDa protein 1-like</fullName>
        <shortName>Heat shock 70 kDa protein 1L</shortName>
    </recommendedName>
    <alternativeName>
        <fullName>Heat shock 70 kDa-like protein 1</fullName>
    </alternativeName>
    <alternativeName>
        <fullName>Spermatid-specific heat shock protein 70</fullName>
    </alternativeName>
</protein>
<name>HS71L_MOUSE</name>
<gene>
    <name type="primary">Hspa1l</name>
    <name type="synonym">Hsc70t</name>
</gene>
<feature type="chain" id="PRO_0000078256" description="Heat shock 70 kDa protein 1-like">
    <location>
        <begin position="1"/>
        <end position="641"/>
    </location>
</feature>
<feature type="region of interest" description="Nucleotide-binding domain (NBD)" evidence="2">
    <location>
        <begin position="3"/>
        <end position="388"/>
    </location>
</feature>
<feature type="region of interest" description="Substrate-binding domain (SBD)" evidence="2">
    <location>
        <begin position="396"/>
        <end position="511"/>
    </location>
</feature>
<feature type="binding site" evidence="1">
    <location>
        <begin position="14"/>
        <end position="17"/>
    </location>
    <ligand>
        <name>ATP</name>
        <dbReference type="ChEBI" id="CHEBI:30616"/>
    </ligand>
</feature>
<feature type="binding site" evidence="1">
    <location>
        <position position="73"/>
    </location>
    <ligand>
        <name>ATP</name>
        <dbReference type="ChEBI" id="CHEBI:30616"/>
    </ligand>
</feature>
<feature type="binding site" evidence="1">
    <location>
        <begin position="204"/>
        <end position="206"/>
    </location>
    <ligand>
        <name>ATP</name>
        <dbReference type="ChEBI" id="CHEBI:30616"/>
    </ligand>
</feature>
<feature type="binding site" evidence="1">
    <location>
        <begin position="270"/>
        <end position="277"/>
    </location>
    <ligand>
        <name>ATP</name>
        <dbReference type="ChEBI" id="CHEBI:30616"/>
    </ligand>
</feature>
<feature type="binding site" evidence="1">
    <location>
        <begin position="341"/>
        <end position="344"/>
    </location>
    <ligand>
        <name>ATP</name>
        <dbReference type="ChEBI" id="CHEBI:30616"/>
    </ligand>
</feature>
<feature type="sequence conflict" description="In Ref. 4; BAA32522." evidence="4" ref="4">
    <original>K</original>
    <variation>N</variation>
    <location>
        <position position="570"/>
    </location>
</feature>
<feature type="sequence conflict" description="In Ref. 1; AAA74906." evidence="4" ref="1">
    <original>G</original>
    <variation>D</variation>
    <location>
        <position position="634"/>
    </location>
</feature>
<proteinExistence type="evidence at protein level"/>
<sequence>MAANKGMAIGIDLGTTYSCVGVFQHGKVEIIANDQGNRTTPSYVAFTDTERLIGDAAKNQVAMNPQNTVFDAKRLIGRKFNDPVVQSDMKLWPFQVINEAGKPKVMVSYKGEKKAFYPEEISSMVLTKMKETAEAFLGHNVTNAVITVPAYFNDSQRQATKDAGVIAGLNVLRIINEPTAAAIAYGLDKGSHGERHVLIFDLGGGTFDVSILTIDDGIFEVKATAGDTHLGGEDFDNRLVSHFVEEFKRKHKKDISQNKRAVRRLRTACERAKRTLSSSTQANLEIDSLYEGIDFYTSITRARFEELCADLFRGTLEPVEKSLRDAKMDKAKIHDIVLVGGSTRIPKVQKLLQDYFNGRDLNKSINPDEAVAYGAAVQAAILMGDKSEKVQDLLLLDVAPLSLGLETAGGVMTVLIKRNSTIPTKQTQIFTTYSDNQPGVLIQVYEGERAMTRDNNLLGRFDLTGIPPAPRGVPQIEVTFDIDANGILNVTAMDKSTGKANKITITNDKGRLSKEEIERMVQEAERYKAEDEGQREKIAAKNALESYAFNMKSAVGDEGLKDKISESDKKKILDKCNEVLSWLEANQLAEKDEFDHKRKELENMCNPIITKLYQSGCTGPTCTPGYTPGRAATGPTIEEVD</sequence>
<accession>P16627</accession>
<accession>O88686</accession>
<accession>Q61693</accession>
<evidence type="ECO:0000250" key="1"/>
<evidence type="ECO:0000250" key="2">
    <source>
        <dbReference type="UniProtKB" id="P11142"/>
    </source>
</evidence>
<evidence type="ECO:0000250" key="3">
    <source>
        <dbReference type="UniProtKB" id="P34931"/>
    </source>
</evidence>
<evidence type="ECO:0000305" key="4"/>
<dbReference type="EMBL" id="M32218">
    <property type="protein sequence ID" value="AAA74906.1"/>
    <property type="molecule type" value="mRNA"/>
</dbReference>
<dbReference type="EMBL" id="L27086">
    <property type="protein sequence ID" value="AAA59362.1"/>
    <property type="molecule type" value="Genomic_DNA"/>
</dbReference>
<dbReference type="EMBL" id="D85732">
    <property type="protein sequence ID" value="BAA32522.1"/>
    <property type="molecule type" value="mRNA"/>
</dbReference>
<dbReference type="EMBL" id="AF109906">
    <property type="protein sequence ID" value="AAC84170.1"/>
    <property type="molecule type" value="Genomic_DNA"/>
</dbReference>
<dbReference type="CCDS" id="CCDS28670.1"/>
<dbReference type="PIR" id="A34041">
    <property type="entry name" value="A34041"/>
</dbReference>
<dbReference type="PIR" id="I49761">
    <property type="entry name" value="I49761"/>
</dbReference>
<dbReference type="RefSeq" id="NP_038586.2">
    <property type="nucleotide sequence ID" value="NM_013558.2"/>
</dbReference>
<dbReference type="SMR" id="P16627"/>
<dbReference type="BioGRID" id="200429">
    <property type="interactions" value="8"/>
</dbReference>
<dbReference type="FunCoup" id="P16627">
    <property type="interactions" value="1544"/>
</dbReference>
<dbReference type="IntAct" id="P16627">
    <property type="interactions" value="7"/>
</dbReference>
<dbReference type="MINT" id="P16627"/>
<dbReference type="STRING" id="10090.ENSMUSP00000007248"/>
<dbReference type="CarbonylDB" id="P16627"/>
<dbReference type="GlyGen" id="P16627">
    <property type="glycosylation" value="3 sites, 2 N-linked glycans (2 sites), 1 O-linked glycan (1 site)"/>
</dbReference>
<dbReference type="iPTMnet" id="P16627"/>
<dbReference type="PhosphoSitePlus" id="P16627"/>
<dbReference type="SwissPalm" id="P16627"/>
<dbReference type="REPRODUCTION-2DPAGE" id="IPI00133208"/>
<dbReference type="REPRODUCTION-2DPAGE" id="P16627"/>
<dbReference type="jPOST" id="P16627"/>
<dbReference type="PaxDb" id="10090-ENSMUSP00000007248"/>
<dbReference type="ProteomicsDB" id="273140"/>
<dbReference type="Pumba" id="P16627"/>
<dbReference type="Antibodypedia" id="13096">
    <property type="antibodies" value="404 antibodies from 35 providers"/>
</dbReference>
<dbReference type="DNASU" id="15482"/>
<dbReference type="Ensembl" id="ENSMUST00000007248.5">
    <property type="protein sequence ID" value="ENSMUSP00000007248.4"/>
    <property type="gene ID" value="ENSMUSG00000007033.5"/>
</dbReference>
<dbReference type="GeneID" id="15482"/>
<dbReference type="KEGG" id="mmu:15482"/>
<dbReference type="UCSC" id="uc008ceq.1">
    <property type="organism name" value="mouse"/>
</dbReference>
<dbReference type="AGR" id="MGI:96231"/>
<dbReference type="CTD" id="3305"/>
<dbReference type="MGI" id="MGI:96231">
    <property type="gene designation" value="Hspa1l"/>
</dbReference>
<dbReference type="VEuPathDB" id="HostDB:ENSMUSG00000007033"/>
<dbReference type="eggNOG" id="KOG0101">
    <property type="taxonomic scope" value="Eukaryota"/>
</dbReference>
<dbReference type="GeneTree" id="ENSGT00940000162096"/>
<dbReference type="HOGENOM" id="CLU_005965_3_0_1"/>
<dbReference type="InParanoid" id="P16627"/>
<dbReference type="OMA" id="VCKPIVT"/>
<dbReference type="OrthoDB" id="2401965at2759"/>
<dbReference type="PhylomeDB" id="P16627"/>
<dbReference type="TreeFam" id="TF105042"/>
<dbReference type="Reactome" id="R-MMU-3371453">
    <property type="pathway name" value="Regulation of HSF1-mediated heat shock response"/>
</dbReference>
<dbReference type="Reactome" id="R-MMU-3371497">
    <property type="pathway name" value="HSP90 chaperone cycle for steroid hormone receptors (SHR) in the presence of ligand"/>
</dbReference>
<dbReference type="Reactome" id="R-MMU-3371568">
    <property type="pathway name" value="Attenuation phase"/>
</dbReference>
<dbReference type="Reactome" id="R-MMU-3371571">
    <property type="pathway name" value="HSF1-dependent transactivation"/>
</dbReference>
<dbReference type="Reactome" id="R-MMU-9833482">
    <property type="pathway name" value="PKR-mediated signaling"/>
</dbReference>
<dbReference type="BioGRID-ORCS" id="15482">
    <property type="hits" value="2 hits in 77 CRISPR screens"/>
</dbReference>
<dbReference type="CD-CODE" id="CE726F99">
    <property type="entry name" value="Postsynaptic density"/>
</dbReference>
<dbReference type="ChiTaRS" id="Hspa1l">
    <property type="organism name" value="mouse"/>
</dbReference>
<dbReference type="PRO" id="PR:P16627"/>
<dbReference type="Proteomes" id="UP000000589">
    <property type="component" value="Chromosome 17"/>
</dbReference>
<dbReference type="RNAct" id="P16627">
    <property type="molecule type" value="protein"/>
</dbReference>
<dbReference type="Bgee" id="ENSMUSG00000007033">
    <property type="expression patterns" value="Expressed in seminiferous tubule of testis and 73 other cell types or tissues"/>
</dbReference>
<dbReference type="ExpressionAtlas" id="P16627">
    <property type="expression patterns" value="baseline and differential"/>
</dbReference>
<dbReference type="GO" id="GO:0044297">
    <property type="term" value="C:cell body"/>
    <property type="evidence" value="ECO:0000314"/>
    <property type="project" value="MGI"/>
</dbReference>
<dbReference type="GO" id="GO:0008180">
    <property type="term" value="C:COP9 signalosome"/>
    <property type="evidence" value="ECO:0007669"/>
    <property type="project" value="Ensembl"/>
</dbReference>
<dbReference type="GO" id="GO:0005829">
    <property type="term" value="C:cytosol"/>
    <property type="evidence" value="ECO:0007669"/>
    <property type="project" value="Ensembl"/>
</dbReference>
<dbReference type="GO" id="GO:0002199">
    <property type="term" value="C:zona pellucida receptor complex"/>
    <property type="evidence" value="ECO:0000314"/>
    <property type="project" value="MGI"/>
</dbReference>
<dbReference type="GO" id="GO:0005524">
    <property type="term" value="F:ATP binding"/>
    <property type="evidence" value="ECO:0007669"/>
    <property type="project" value="UniProtKB-KW"/>
</dbReference>
<dbReference type="GO" id="GO:0140662">
    <property type="term" value="F:ATP-dependent protein folding chaperone"/>
    <property type="evidence" value="ECO:0007669"/>
    <property type="project" value="InterPro"/>
</dbReference>
<dbReference type="GO" id="GO:0031072">
    <property type="term" value="F:heat shock protein binding"/>
    <property type="evidence" value="ECO:0007669"/>
    <property type="project" value="Ensembl"/>
</dbReference>
<dbReference type="GO" id="GO:0031625">
    <property type="term" value="F:ubiquitin protein ligase binding"/>
    <property type="evidence" value="ECO:0007669"/>
    <property type="project" value="Ensembl"/>
</dbReference>
<dbReference type="GO" id="GO:0051082">
    <property type="term" value="F:unfolded protein binding"/>
    <property type="evidence" value="ECO:0007669"/>
    <property type="project" value="Ensembl"/>
</dbReference>
<dbReference type="GO" id="GO:0007339">
    <property type="term" value="P:binding of sperm to zona pellucida"/>
    <property type="evidence" value="ECO:0000314"/>
    <property type="project" value="MGI"/>
</dbReference>
<dbReference type="GO" id="GO:0030154">
    <property type="term" value="P:cell differentiation"/>
    <property type="evidence" value="ECO:0007669"/>
    <property type="project" value="UniProtKB-KW"/>
</dbReference>
<dbReference type="GO" id="GO:1903955">
    <property type="term" value="P:positive regulation of protein targeting to mitochondrion"/>
    <property type="evidence" value="ECO:0007669"/>
    <property type="project" value="Ensembl"/>
</dbReference>
<dbReference type="GO" id="GO:0042026">
    <property type="term" value="P:protein refolding"/>
    <property type="evidence" value="ECO:0007669"/>
    <property type="project" value="Ensembl"/>
</dbReference>
<dbReference type="GO" id="GO:0007283">
    <property type="term" value="P:spermatogenesis"/>
    <property type="evidence" value="ECO:0007669"/>
    <property type="project" value="UniProtKB-KW"/>
</dbReference>
<dbReference type="CDD" id="cd10233">
    <property type="entry name" value="ASKHA_NBD_HSP70_HSPA1"/>
    <property type="match status" value="1"/>
</dbReference>
<dbReference type="FunFam" id="2.60.34.10:FF:000002">
    <property type="entry name" value="Heat shock 70 kDa"/>
    <property type="match status" value="1"/>
</dbReference>
<dbReference type="FunFam" id="3.30.420.40:FF:000172">
    <property type="entry name" value="Heat shock 70 kDa protein"/>
    <property type="match status" value="1"/>
</dbReference>
<dbReference type="FunFam" id="1.20.1270.10:FF:000019">
    <property type="entry name" value="Heat shock 70 kDa protein 1-like"/>
    <property type="match status" value="1"/>
</dbReference>
<dbReference type="FunFam" id="3.30.30.30:FF:000001">
    <property type="entry name" value="heat shock 70 kDa protein-like"/>
    <property type="match status" value="1"/>
</dbReference>
<dbReference type="FunFam" id="3.30.420.40:FF:000028">
    <property type="entry name" value="heat shock 70 kDa protein-like"/>
    <property type="match status" value="1"/>
</dbReference>
<dbReference type="FunFam" id="3.30.420.40:FF:000135">
    <property type="entry name" value="Heat shock cognate 71 kDa protein"/>
    <property type="match status" value="1"/>
</dbReference>
<dbReference type="FunFam" id="3.90.640.10:FF:000134">
    <property type="entry name" value="Heat shock cognate 71 kDa protein"/>
    <property type="match status" value="1"/>
</dbReference>
<dbReference type="FunFam" id="3.30.420.40:FF:000026">
    <property type="entry name" value="Heat shock protein 70"/>
    <property type="match status" value="1"/>
</dbReference>
<dbReference type="Gene3D" id="1.20.1270.10">
    <property type="match status" value="1"/>
</dbReference>
<dbReference type="Gene3D" id="3.30.30.30">
    <property type="match status" value="1"/>
</dbReference>
<dbReference type="Gene3D" id="3.30.420.40">
    <property type="match status" value="2"/>
</dbReference>
<dbReference type="Gene3D" id="3.90.640.10">
    <property type="entry name" value="Actin, Chain A, domain 4"/>
    <property type="match status" value="1"/>
</dbReference>
<dbReference type="Gene3D" id="2.60.34.10">
    <property type="entry name" value="Substrate Binding Domain Of DNAk, Chain A, domain 1"/>
    <property type="match status" value="1"/>
</dbReference>
<dbReference type="InterPro" id="IPR043129">
    <property type="entry name" value="ATPase_NBD"/>
</dbReference>
<dbReference type="InterPro" id="IPR018181">
    <property type="entry name" value="Heat_shock_70_CS"/>
</dbReference>
<dbReference type="InterPro" id="IPR029048">
    <property type="entry name" value="HSP70_C_sf"/>
</dbReference>
<dbReference type="InterPro" id="IPR029047">
    <property type="entry name" value="HSP70_peptide-bd_sf"/>
</dbReference>
<dbReference type="InterPro" id="IPR013126">
    <property type="entry name" value="Hsp_70_fam"/>
</dbReference>
<dbReference type="NCBIfam" id="NF001413">
    <property type="entry name" value="PRK00290.1"/>
    <property type="match status" value="1"/>
</dbReference>
<dbReference type="PANTHER" id="PTHR19375">
    <property type="entry name" value="HEAT SHOCK PROTEIN 70KDA"/>
    <property type="match status" value="1"/>
</dbReference>
<dbReference type="Pfam" id="PF00012">
    <property type="entry name" value="HSP70"/>
    <property type="match status" value="1"/>
</dbReference>
<dbReference type="PRINTS" id="PR00301">
    <property type="entry name" value="HEATSHOCK70"/>
</dbReference>
<dbReference type="SUPFAM" id="SSF53067">
    <property type="entry name" value="Actin-like ATPase domain"/>
    <property type="match status" value="2"/>
</dbReference>
<dbReference type="SUPFAM" id="SSF100934">
    <property type="entry name" value="Heat shock protein 70kD (HSP70), C-terminal subdomain"/>
    <property type="match status" value="1"/>
</dbReference>
<dbReference type="SUPFAM" id="SSF100920">
    <property type="entry name" value="Heat shock protein 70kD (HSP70), peptide-binding domain"/>
    <property type="match status" value="1"/>
</dbReference>
<dbReference type="PROSITE" id="PS00297">
    <property type="entry name" value="HSP70_1"/>
    <property type="match status" value="1"/>
</dbReference>
<dbReference type="PROSITE" id="PS00329">
    <property type="entry name" value="HSP70_2"/>
    <property type="match status" value="1"/>
</dbReference>
<dbReference type="PROSITE" id="PS01036">
    <property type="entry name" value="HSP70_3"/>
    <property type="match status" value="1"/>
</dbReference>
<organism>
    <name type="scientific">Mus musculus</name>
    <name type="common">Mouse</name>
    <dbReference type="NCBI Taxonomy" id="10090"/>
    <lineage>
        <taxon>Eukaryota</taxon>
        <taxon>Metazoa</taxon>
        <taxon>Chordata</taxon>
        <taxon>Craniata</taxon>
        <taxon>Vertebrata</taxon>
        <taxon>Euteleostomi</taxon>
        <taxon>Mammalia</taxon>
        <taxon>Eutheria</taxon>
        <taxon>Euarchontoglires</taxon>
        <taxon>Glires</taxon>
        <taxon>Rodentia</taxon>
        <taxon>Myomorpha</taxon>
        <taxon>Muroidea</taxon>
        <taxon>Muridae</taxon>
        <taxon>Murinae</taxon>
        <taxon>Mus</taxon>
        <taxon>Mus</taxon>
    </lineage>
</organism>
<reference key="1">
    <citation type="journal article" date="1990" name="Biochem. Biophys. Res. Commun.">
        <title>Cloning of a hsp70-related gene expressed in mouse spermatids.</title>
        <authorList>
            <person name="Matsumoto M."/>
            <person name="Fujimoto H."/>
        </authorList>
    </citation>
    <scope>NUCLEOTIDE SEQUENCE [MRNA]</scope>
</reference>
<reference key="2">
    <citation type="submission" date="1995-08" db="EMBL/GenBank/DDBJ databases">
        <authorList>
            <person name="Fujimoto H."/>
        </authorList>
    </citation>
    <scope>SEQUENCE REVISION</scope>
</reference>
<reference key="3">
    <citation type="journal article" date="1994" name="Immunogenetics">
        <title>Coding sequences and levels of expression of Hsc70t are identical in mice with different Orch-1 alleles.</title>
        <authorList>
            <person name="Snoek M."/>
            <person name="Olavesen M.G."/>
            <person name="van Vugt H."/>
            <person name="Milner C.M."/>
            <person name="Teuscher C."/>
            <person name="Campbell R.D."/>
        </authorList>
    </citation>
    <scope>NUCLEOTIDE SEQUENCE [GENOMIC DNA]</scope>
    <source>
        <tissue>Testis</tissue>
    </source>
</reference>
<reference key="4">
    <citation type="journal article" date="1998" name="J. Biochem.">
        <title>Genomic structure of the spermatid-specific HSP70 homolog gene located in the class III region of the major histocompatibility complex of mouse and man.</title>
        <authorList>
            <person name="Ito Y."/>
            <person name="Ando A."/>
            <person name="Ando H."/>
            <person name="Ando J."/>
            <person name="Saijoh Y."/>
            <person name="Inoko H."/>
            <person name="Fujimoto H."/>
        </authorList>
    </citation>
    <scope>NUCLEOTIDE SEQUENCE [MRNA]</scope>
    <source>
        <strain>BALB/cJ</strain>
        <tissue>Testis</tissue>
    </source>
</reference>
<reference key="5">
    <citation type="journal article" date="2003" name="Genome Res.">
        <title>Analysis of the gene-dense major histocompatibility complex class III region and its comparison to mouse.</title>
        <authorList>
            <person name="Xie T."/>
            <person name="Rowen L."/>
            <person name="Aguado B."/>
            <person name="Ahearn M.E."/>
            <person name="Madan A."/>
            <person name="Qin S."/>
            <person name="Campbell R.D."/>
            <person name="Hood L."/>
        </authorList>
    </citation>
    <scope>NUCLEOTIDE SEQUENCE [LARGE SCALE GENOMIC DNA]</scope>
    <source>
        <strain>129</strain>
    </source>
</reference>
<reference key="6">
    <citation type="journal article" date="2010" name="Cell">
        <title>A tissue-specific atlas of mouse protein phosphorylation and expression.</title>
        <authorList>
            <person name="Huttlin E.L."/>
            <person name="Jedrychowski M.P."/>
            <person name="Elias J.E."/>
            <person name="Goswami T."/>
            <person name="Rad R."/>
            <person name="Beausoleil S.A."/>
            <person name="Villen J."/>
            <person name="Haas W."/>
            <person name="Sowa M.E."/>
            <person name="Gygi S.P."/>
        </authorList>
    </citation>
    <scope>IDENTIFICATION BY MASS SPECTROMETRY [LARGE SCALE ANALYSIS]</scope>
    <source>
        <tissue>Brain</tissue>
        <tissue>Kidney</tissue>
        <tissue>Liver</tissue>
        <tissue>Lung</tissue>
        <tissue>Pancreas</tissue>
        <tissue>Spleen</tissue>
        <tissue>Testis</tissue>
    </source>
</reference>